<reference key="1">
    <citation type="journal article" date="2002" name="DNA Res.">
        <title>Complete genomic sequence of nitrogen-fixing symbiotic bacterium Bradyrhizobium japonicum USDA110.</title>
        <authorList>
            <person name="Kaneko T."/>
            <person name="Nakamura Y."/>
            <person name="Sato S."/>
            <person name="Minamisawa K."/>
            <person name="Uchiumi T."/>
            <person name="Sasamoto S."/>
            <person name="Watanabe A."/>
            <person name="Idesawa K."/>
            <person name="Iriguchi M."/>
            <person name="Kawashima K."/>
            <person name="Kohara M."/>
            <person name="Matsumoto M."/>
            <person name="Shimpo S."/>
            <person name="Tsuruoka H."/>
            <person name="Wada T."/>
            <person name="Yamada M."/>
            <person name="Tabata S."/>
        </authorList>
    </citation>
    <scope>NUCLEOTIDE SEQUENCE [LARGE SCALE GENOMIC DNA]</scope>
    <source>
        <strain>JCM 10833 / BCRC 13528 / IAM 13628 / NBRC 14792 / USDA 110</strain>
    </source>
</reference>
<proteinExistence type="inferred from homology"/>
<gene>
    <name type="ordered locus">bll0673</name>
</gene>
<dbReference type="EC" id="3.6.1.66" evidence="1"/>
<dbReference type="EMBL" id="BA000040">
    <property type="protein sequence ID" value="BAC45938.1"/>
    <property type="molecule type" value="Genomic_DNA"/>
</dbReference>
<dbReference type="RefSeq" id="NP_767313.1">
    <property type="nucleotide sequence ID" value="NC_004463.1"/>
</dbReference>
<dbReference type="RefSeq" id="WP_011083500.1">
    <property type="nucleotide sequence ID" value="NC_004463.1"/>
</dbReference>
<dbReference type="SMR" id="Q89WK5"/>
<dbReference type="FunCoup" id="Q89WK5">
    <property type="interactions" value="683"/>
</dbReference>
<dbReference type="STRING" id="224911.AAV28_00200"/>
<dbReference type="EnsemblBacteria" id="BAC45938">
    <property type="protein sequence ID" value="BAC45938"/>
    <property type="gene ID" value="BAC45938"/>
</dbReference>
<dbReference type="GeneID" id="46487946"/>
<dbReference type="KEGG" id="bja:bll0673"/>
<dbReference type="PATRIC" id="fig|224911.44.peg.42"/>
<dbReference type="eggNOG" id="COG0127">
    <property type="taxonomic scope" value="Bacteria"/>
</dbReference>
<dbReference type="HOGENOM" id="CLU_082080_0_0_5"/>
<dbReference type="InParanoid" id="Q89WK5"/>
<dbReference type="OrthoDB" id="9807456at2"/>
<dbReference type="PhylomeDB" id="Q89WK5"/>
<dbReference type="Proteomes" id="UP000002526">
    <property type="component" value="Chromosome"/>
</dbReference>
<dbReference type="GO" id="GO:0005737">
    <property type="term" value="C:cytoplasm"/>
    <property type="evidence" value="ECO:0000318"/>
    <property type="project" value="GO_Central"/>
</dbReference>
<dbReference type="GO" id="GO:0005829">
    <property type="term" value="C:cytosol"/>
    <property type="evidence" value="ECO:0000318"/>
    <property type="project" value="GO_Central"/>
</dbReference>
<dbReference type="GO" id="GO:0035870">
    <property type="term" value="F:dITP diphosphatase activity"/>
    <property type="evidence" value="ECO:0007669"/>
    <property type="project" value="RHEA"/>
</dbReference>
<dbReference type="GO" id="GO:0036220">
    <property type="term" value="F:ITP diphosphatase activity"/>
    <property type="evidence" value="ECO:0007669"/>
    <property type="project" value="UniProtKB-EC"/>
</dbReference>
<dbReference type="GO" id="GO:0046872">
    <property type="term" value="F:metal ion binding"/>
    <property type="evidence" value="ECO:0007669"/>
    <property type="project" value="UniProtKB-KW"/>
</dbReference>
<dbReference type="GO" id="GO:0047429">
    <property type="term" value="F:nucleoside triphosphate diphosphatase activity"/>
    <property type="evidence" value="ECO:0000318"/>
    <property type="project" value="GO_Central"/>
</dbReference>
<dbReference type="GO" id="GO:0000166">
    <property type="term" value="F:nucleotide binding"/>
    <property type="evidence" value="ECO:0007669"/>
    <property type="project" value="UniProtKB-KW"/>
</dbReference>
<dbReference type="GO" id="GO:0017111">
    <property type="term" value="F:ribonucleoside triphosphate phosphatase activity"/>
    <property type="evidence" value="ECO:0007669"/>
    <property type="project" value="InterPro"/>
</dbReference>
<dbReference type="GO" id="GO:0036222">
    <property type="term" value="F:XTP diphosphatase activity"/>
    <property type="evidence" value="ECO:0007669"/>
    <property type="project" value="RHEA"/>
</dbReference>
<dbReference type="GO" id="GO:0009143">
    <property type="term" value="P:nucleoside triphosphate catabolic process"/>
    <property type="evidence" value="ECO:0000318"/>
    <property type="project" value="GO_Central"/>
</dbReference>
<dbReference type="GO" id="GO:0009117">
    <property type="term" value="P:nucleotide metabolic process"/>
    <property type="evidence" value="ECO:0007669"/>
    <property type="project" value="UniProtKB-KW"/>
</dbReference>
<dbReference type="GO" id="GO:0009146">
    <property type="term" value="P:purine nucleoside triphosphate catabolic process"/>
    <property type="evidence" value="ECO:0007669"/>
    <property type="project" value="UniProtKB-UniRule"/>
</dbReference>
<dbReference type="CDD" id="cd00515">
    <property type="entry name" value="HAM1"/>
    <property type="match status" value="1"/>
</dbReference>
<dbReference type="FunFam" id="3.90.950.10:FF:000001">
    <property type="entry name" value="dITP/XTP pyrophosphatase"/>
    <property type="match status" value="1"/>
</dbReference>
<dbReference type="Gene3D" id="3.90.950.10">
    <property type="match status" value="1"/>
</dbReference>
<dbReference type="HAMAP" id="MF_01405">
    <property type="entry name" value="Non_canon_purine_NTPase"/>
    <property type="match status" value="1"/>
</dbReference>
<dbReference type="InterPro" id="IPR020922">
    <property type="entry name" value="dITP/XTP_pyrophosphatase"/>
</dbReference>
<dbReference type="InterPro" id="IPR029001">
    <property type="entry name" value="ITPase-like_fam"/>
</dbReference>
<dbReference type="InterPro" id="IPR002637">
    <property type="entry name" value="RdgB/HAM1"/>
</dbReference>
<dbReference type="NCBIfam" id="TIGR00042">
    <property type="entry name" value="RdgB/HAM1 family non-canonical purine NTP pyrophosphatase"/>
    <property type="match status" value="1"/>
</dbReference>
<dbReference type="PANTHER" id="PTHR11067:SF9">
    <property type="entry name" value="INOSINE TRIPHOSPHATE PYROPHOSPHATASE"/>
    <property type="match status" value="1"/>
</dbReference>
<dbReference type="PANTHER" id="PTHR11067">
    <property type="entry name" value="INOSINE TRIPHOSPHATE PYROPHOSPHATASE/HAM1 PROTEIN"/>
    <property type="match status" value="1"/>
</dbReference>
<dbReference type="Pfam" id="PF01725">
    <property type="entry name" value="Ham1p_like"/>
    <property type="match status" value="1"/>
</dbReference>
<dbReference type="SUPFAM" id="SSF52972">
    <property type="entry name" value="ITPase-like"/>
    <property type="match status" value="1"/>
</dbReference>
<sequence length="211" mass="22761">MHRRITGKLVIATHNPGKLAEMKELLAPYGIEAVSAGELGLSEPDETGNDFRSNAAIKAIAAAHASKLPSFADDSGIVVDALDGAPGIYSARWAGPTKDFTAAMTRIERLLQERGATAPDKRKAHFVSALCVAWPDDHLEEVEARVDGTLVWPPRGTAGFGYDPMFRPDGHTRTFGEMTSIEKHGLPPLGLALSHRARAFVKLAEICLEPR</sequence>
<organism>
    <name type="scientific">Bradyrhizobium diazoefficiens (strain JCM 10833 / BCRC 13528 / IAM 13628 / NBRC 14792 / USDA 110)</name>
    <dbReference type="NCBI Taxonomy" id="224911"/>
    <lineage>
        <taxon>Bacteria</taxon>
        <taxon>Pseudomonadati</taxon>
        <taxon>Pseudomonadota</taxon>
        <taxon>Alphaproteobacteria</taxon>
        <taxon>Hyphomicrobiales</taxon>
        <taxon>Nitrobacteraceae</taxon>
        <taxon>Bradyrhizobium</taxon>
    </lineage>
</organism>
<protein>
    <recommendedName>
        <fullName evidence="1">dITP/XTP pyrophosphatase</fullName>
        <ecNumber evidence="1">3.6.1.66</ecNumber>
    </recommendedName>
    <alternativeName>
        <fullName evidence="1">Non-canonical purine NTP pyrophosphatase</fullName>
    </alternativeName>
    <alternativeName>
        <fullName evidence="1">Non-standard purine NTP pyrophosphatase</fullName>
    </alternativeName>
    <alternativeName>
        <fullName evidence="1">Nucleoside-triphosphate diphosphatase</fullName>
    </alternativeName>
    <alternativeName>
        <fullName evidence="1">Nucleoside-triphosphate pyrophosphatase</fullName>
        <shortName evidence="1">NTPase</shortName>
    </alternativeName>
</protein>
<evidence type="ECO:0000255" key="1">
    <source>
        <dbReference type="HAMAP-Rule" id="MF_01405"/>
    </source>
</evidence>
<keyword id="KW-0378">Hydrolase</keyword>
<keyword id="KW-0460">Magnesium</keyword>
<keyword id="KW-0479">Metal-binding</keyword>
<keyword id="KW-0546">Nucleotide metabolism</keyword>
<keyword id="KW-0547">Nucleotide-binding</keyword>
<keyword id="KW-1185">Reference proteome</keyword>
<name>IXTPA_BRADU</name>
<comment type="function">
    <text evidence="1">Pyrophosphatase that catalyzes the hydrolysis of nucleoside triphosphates to their monophosphate derivatives, with a high preference for the non-canonical purine nucleotides XTP (xanthosine triphosphate), dITP (deoxyinosine triphosphate) and ITP. Seems to function as a house-cleaning enzyme that removes non-canonical purine nucleotides from the nucleotide pool, thus preventing their incorporation into DNA/RNA and avoiding chromosomal lesions.</text>
</comment>
<comment type="catalytic activity">
    <reaction evidence="1">
        <text>XTP + H2O = XMP + diphosphate + H(+)</text>
        <dbReference type="Rhea" id="RHEA:28610"/>
        <dbReference type="ChEBI" id="CHEBI:15377"/>
        <dbReference type="ChEBI" id="CHEBI:15378"/>
        <dbReference type="ChEBI" id="CHEBI:33019"/>
        <dbReference type="ChEBI" id="CHEBI:57464"/>
        <dbReference type="ChEBI" id="CHEBI:61314"/>
        <dbReference type="EC" id="3.6.1.66"/>
    </reaction>
</comment>
<comment type="catalytic activity">
    <reaction evidence="1">
        <text>dITP + H2O = dIMP + diphosphate + H(+)</text>
        <dbReference type="Rhea" id="RHEA:28342"/>
        <dbReference type="ChEBI" id="CHEBI:15377"/>
        <dbReference type="ChEBI" id="CHEBI:15378"/>
        <dbReference type="ChEBI" id="CHEBI:33019"/>
        <dbReference type="ChEBI" id="CHEBI:61194"/>
        <dbReference type="ChEBI" id="CHEBI:61382"/>
        <dbReference type="EC" id="3.6.1.66"/>
    </reaction>
</comment>
<comment type="catalytic activity">
    <reaction evidence="1">
        <text>ITP + H2O = IMP + diphosphate + H(+)</text>
        <dbReference type="Rhea" id="RHEA:29399"/>
        <dbReference type="ChEBI" id="CHEBI:15377"/>
        <dbReference type="ChEBI" id="CHEBI:15378"/>
        <dbReference type="ChEBI" id="CHEBI:33019"/>
        <dbReference type="ChEBI" id="CHEBI:58053"/>
        <dbReference type="ChEBI" id="CHEBI:61402"/>
        <dbReference type="EC" id="3.6.1.66"/>
    </reaction>
</comment>
<comment type="cofactor">
    <cofactor evidence="1">
        <name>Mg(2+)</name>
        <dbReference type="ChEBI" id="CHEBI:18420"/>
    </cofactor>
    <text evidence="1">Binds 1 Mg(2+) ion per subunit.</text>
</comment>
<comment type="subunit">
    <text evidence="1">Homodimer.</text>
</comment>
<comment type="similarity">
    <text evidence="1">Belongs to the HAM1 NTPase family.</text>
</comment>
<accession>Q89WK5</accession>
<feature type="chain" id="PRO_0000178140" description="dITP/XTP pyrophosphatase">
    <location>
        <begin position="1"/>
        <end position="211"/>
    </location>
</feature>
<feature type="active site" description="Proton acceptor" evidence="1">
    <location>
        <position position="74"/>
    </location>
</feature>
<feature type="binding site" evidence="1">
    <location>
        <begin position="13"/>
        <end position="18"/>
    </location>
    <ligand>
        <name>substrate</name>
    </ligand>
</feature>
<feature type="binding site" evidence="1">
    <location>
        <position position="45"/>
    </location>
    <ligand>
        <name>Mg(2+)</name>
        <dbReference type="ChEBI" id="CHEBI:18420"/>
    </ligand>
</feature>
<feature type="binding site" evidence="1">
    <location>
        <position position="74"/>
    </location>
    <ligand>
        <name>Mg(2+)</name>
        <dbReference type="ChEBI" id="CHEBI:18420"/>
    </ligand>
</feature>
<feature type="binding site" evidence="1">
    <location>
        <position position="75"/>
    </location>
    <ligand>
        <name>substrate</name>
    </ligand>
</feature>
<feature type="binding site" evidence="1">
    <location>
        <begin position="160"/>
        <end position="163"/>
    </location>
    <ligand>
        <name>substrate</name>
    </ligand>
</feature>
<feature type="binding site" evidence="1">
    <location>
        <position position="183"/>
    </location>
    <ligand>
        <name>substrate</name>
    </ligand>
</feature>
<feature type="binding site" evidence="1">
    <location>
        <begin position="195"/>
        <end position="196"/>
    </location>
    <ligand>
        <name>substrate</name>
    </ligand>
</feature>